<gene>
    <name evidence="1" type="primary">trmD</name>
    <name type="ordered locus">Mpe_A1106</name>
</gene>
<evidence type="ECO:0000255" key="1">
    <source>
        <dbReference type="HAMAP-Rule" id="MF_00605"/>
    </source>
</evidence>
<keyword id="KW-0963">Cytoplasm</keyword>
<keyword id="KW-0489">Methyltransferase</keyword>
<keyword id="KW-1185">Reference proteome</keyword>
<keyword id="KW-0949">S-adenosyl-L-methionine</keyword>
<keyword id="KW-0808">Transferase</keyword>
<keyword id="KW-0819">tRNA processing</keyword>
<reference key="1">
    <citation type="journal article" date="2007" name="J. Bacteriol.">
        <title>Whole-genome analysis of the methyl tert-butyl ether-degrading beta-proteobacterium Methylibium petroleiphilum PM1.</title>
        <authorList>
            <person name="Kane S.R."/>
            <person name="Chakicherla A.Y."/>
            <person name="Chain P.S.G."/>
            <person name="Schmidt R."/>
            <person name="Shin M.W."/>
            <person name="Legler T.C."/>
            <person name="Scow K.M."/>
            <person name="Larimer F.W."/>
            <person name="Lucas S.M."/>
            <person name="Richardson P.M."/>
            <person name="Hristova K.R."/>
        </authorList>
    </citation>
    <scope>NUCLEOTIDE SEQUENCE [LARGE SCALE GENOMIC DNA]</scope>
    <source>
        <strain>ATCC BAA-1232 / LMG 22953 / PM1</strain>
    </source>
</reference>
<name>TRMD_METPP</name>
<sequence>MRFDVLTLFPELFAPFQAVGVTRRAFESGAIDLKLWQPRDFADNAYRRVDDRPYGGGPGMVMLVEPLERALAAVRDDQAAAGAARTPVLLFSPAGAPLTQRRVEALASEAGAVLVCGRYEGIDQRFIDRHVDEELSLGDFVLSGGELPALALVDAVARLQPGVLNDQTSHQQDSFSDGLLDCPHYSRPEHLGDAAADGVPATLMSGHHAEIARWRRERQLELTARRRPDLIAAARAQGRLTKADERYLQSLPGLGL</sequence>
<comment type="function">
    <text evidence="1">Specifically methylates guanosine-37 in various tRNAs.</text>
</comment>
<comment type="catalytic activity">
    <reaction evidence="1">
        <text>guanosine(37) in tRNA + S-adenosyl-L-methionine = N(1)-methylguanosine(37) in tRNA + S-adenosyl-L-homocysteine + H(+)</text>
        <dbReference type="Rhea" id="RHEA:36899"/>
        <dbReference type="Rhea" id="RHEA-COMP:10145"/>
        <dbReference type="Rhea" id="RHEA-COMP:10147"/>
        <dbReference type="ChEBI" id="CHEBI:15378"/>
        <dbReference type="ChEBI" id="CHEBI:57856"/>
        <dbReference type="ChEBI" id="CHEBI:59789"/>
        <dbReference type="ChEBI" id="CHEBI:73542"/>
        <dbReference type="ChEBI" id="CHEBI:74269"/>
        <dbReference type="EC" id="2.1.1.228"/>
    </reaction>
</comment>
<comment type="subunit">
    <text evidence="1">Homodimer.</text>
</comment>
<comment type="subcellular location">
    <subcellularLocation>
        <location evidence="1">Cytoplasm</location>
    </subcellularLocation>
</comment>
<comment type="similarity">
    <text evidence="1">Belongs to the RNA methyltransferase TrmD family.</text>
</comment>
<accession>A2SES8</accession>
<organism>
    <name type="scientific">Methylibium petroleiphilum (strain ATCC BAA-1232 / LMG 22953 / PM1)</name>
    <dbReference type="NCBI Taxonomy" id="420662"/>
    <lineage>
        <taxon>Bacteria</taxon>
        <taxon>Pseudomonadati</taxon>
        <taxon>Pseudomonadota</taxon>
        <taxon>Betaproteobacteria</taxon>
        <taxon>Burkholderiales</taxon>
        <taxon>Sphaerotilaceae</taxon>
        <taxon>Methylibium</taxon>
    </lineage>
</organism>
<proteinExistence type="inferred from homology"/>
<protein>
    <recommendedName>
        <fullName evidence="1">tRNA (guanine-N(1)-)-methyltransferase</fullName>
        <ecNumber evidence="1">2.1.1.228</ecNumber>
    </recommendedName>
    <alternativeName>
        <fullName evidence="1">M1G-methyltransferase</fullName>
    </alternativeName>
    <alternativeName>
        <fullName evidence="1">tRNA [GM37] methyltransferase</fullName>
    </alternativeName>
</protein>
<dbReference type="EC" id="2.1.1.228" evidence="1"/>
<dbReference type="EMBL" id="CP000555">
    <property type="protein sequence ID" value="ABM94067.1"/>
    <property type="molecule type" value="Genomic_DNA"/>
</dbReference>
<dbReference type="RefSeq" id="WP_011828704.1">
    <property type="nucleotide sequence ID" value="NC_008825.1"/>
</dbReference>
<dbReference type="SMR" id="A2SES8"/>
<dbReference type="STRING" id="420662.Mpe_A1106"/>
<dbReference type="KEGG" id="mpt:Mpe_A1106"/>
<dbReference type="eggNOG" id="COG0336">
    <property type="taxonomic scope" value="Bacteria"/>
</dbReference>
<dbReference type="HOGENOM" id="CLU_047363_0_1_4"/>
<dbReference type="Proteomes" id="UP000000366">
    <property type="component" value="Chromosome"/>
</dbReference>
<dbReference type="GO" id="GO:0005829">
    <property type="term" value="C:cytosol"/>
    <property type="evidence" value="ECO:0007669"/>
    <property type="project" value="TreeGrafter"/>
</dbReference>
<dbReference type="GO" id="GO:0052906">
    <property type="term" value="F:tRNA (guanine(37)-N1)-methyltransferase activity"/>
    <property type="evidence" value="ECO:0007669"/>
    <property type="project" value="UniProtKB-UniRule"/>
</dbReference>
<dbReference type="GO" id="GO:0002939">
    <property type="term" value="P:tRNA N1-guanine methylation"/>
    <property type="evidence" value="ECO:0007669"/>
    <property type="project" value="TreeGrafter"/>
</dbReference>
<dbReference type="CDD" id="cd18080">
    <property type="entry name" value="TrmD-like"/>
    <property type="match status" value="1"/>
</dbReference>
<dbReference type="FunFam" id="3.40.1280.10:FF:000001">
    <property type="entry name" value="tRNA (guanine-N(1)-)-methyltransferase"/>
    <property type="match status" value="1"/>
</dbReference>
<dbReference type="Gene3D" id="3.40.1280.10">
    <property type="match status" value="1"/>
</dbReference>
<dbReference type="Gene3D" id="1.10.1270.20">
    <property type="entry name" value="tRNA(m1g37)methyltransferase, domain 2"/>
    <property type="match status" value="1"/>
</dbReference>
<dbReference type="HAMAP" id="MF_00605">
    <property type="entry name" value="TrmD"/>
    <property type="match status" value="1"/>
</dbReference>
<dbReference type="InterPro" id="IPR029028">
    <property type="entry name" value="Alpha/beta_knot_MTases"/>
</dbReference>
<dbReference type="InterPro" id="IPR023148">
    <property type="entry name" value="tRNA_m1G_MeTrfase_C_sf"/>
</dbReference>
<dbReference type="InterPro" id="IPR002649">
    <property type="entry name" value="tRNA_m1G_MeTrfase_TrmD"/>
</dbReference>
<dbReference type="InterPro" id="IPR029026">
    <property type="entry name" value="tRNA_m1G_MTases_N"/>
</dbReference>
<dbReference type="InterPro" id="IPR016009">
    <property type="entry name" value="tRNA_MeTrfase_TRMD/TRM10"/>
</dbReference>
<dbReference type="NCBIfam" id="NF000648">
    <property type="entry name" value="PRK00026.1"/>
    <property type="match status" value="1"/>
</dbReference>
<dbReference type="NCBIfam" id="TIGR00088">
    <property type="entry name" value="trmD"/>
    <property type="match status" value="1"/>
</dbReference>
<dbReference type="PANTHER" id="PTHR46417">
    <property type="entry name" value="TRNA (GUANINE-N(1)-)-METHYLTRANSFERASE"/>
    <property type="match status" value="1"/>
</dbReference>
<dbReference type="PANTHER" id="PTHR46417:SF1">
    <property type="entry name" value="TRNA (GUANINE-N(1)-)-METHYLTRANSFERASE"/>
    <property type="match status" value="1"/>
</dbReference>
<dbReference type="Pfam" id="PF01746">
    <property type="entry name" value="tRNA_m1G_MT"/>
    <property type="match status" value="1"/>
</dbReference>
<dbReference type="PIRSF" id="PIRSF000386">
    <property type="entry name" value="tRNA_mtase"/>
    <property type="match status" value="1"/>
</dbReference>
<dbReference type="SUPFAM" id="SSF75217">
    <property type="entry name" value="alpha/beta knot"/>
    <property type="match status" value="1"/>
</dbReference>
<feature type="chain" id="PRO_1000006496" description="tRNA (guanine-N(1)-)-methyltransferase">
    <location>
        <begin position="1"/>
        <end position="256"/>
    </location>
</feature>
<feature type="binding site" evidence="1">
    <location>
        <position position="117"/>
    </location>
    <ligand>
        <name>S-adenosyl-L-methionine</name>
        <dbReference type="ChEBI" id="CHEBI:59789"/>
    </ligand>
</feature>
<feature type="binding site" evidence="1">
    <location>
        <begin position="137"/>
        <end position="142"/>
    </location>
    <ligand>
        <name>S-adenosyl-L-methionine</name>
        <dbReference type="ChEBI" id="CHEBI:59789"/>
    </ligand>
</feature>